<evidence type="ECO:0000255" key="1">
    <source>
        <dbReference type="HAMAP-Rule" id="MF_00385"/>
    </source>
</evidence>
<evidence type="ECO:0000256" key="2">
    <source>
        <dbReference type="SAM" id="MobiDB-lite"/>
    </source>
</evidence>
<evidence type="ECO:0000305" key="3"/>
<comment type="similarity">
    <text evidence="1">Belongs to the bacterial ribosomal protein bS16 family.</text>
</comment>
<feature type="chain" id="PRO_1000049297" description="Small ribosomal subunit protein bS16">
    <location>
        <begin position="1"/>
        <end position="161"/>
    </location>
</feature>
<feature type="region of interest" description="Disordered" evidence="2">
    <location>
        <begin position="114"/>
        <end position="161"/>
    </location>
</feature>
<feature type="compositionally biased region" description="Basic residues" evidence="2">
    <location>
        <begin position="124"/>
        <end position="133"/>
    </location>
</feature>
<protein>
    <recommendedName>
        <fullName evidence="1">Small ribosomal subunit protein bS16</fullName>
    </recommendedName>
    <alternativeName>
        <fullName evidence="3">30S ribosomal protein S16</fullName>
    </alternativeName>
</protein>
<keyword id="KW-0687">Ribonucleoprotein</keyword>
<keyword id="KW-0689">Ribosomal protein</keyword>
<sequence>MAVKIKLTRLGKIRNPQYRIAVADARTRRDGRSIEVIGRYHPKEEPSLIEINSERAQYWLSVGAQPTEPVLKLLKITGDWQKFKGLPGAEGRLKVKPPKPSKLELFNAALAAAEGGPTTEATKPKKKSPAKKAKGGEGDADAAAEKVEASAEGEQTESAES</sequence>
<accession>A0PQ63</accession>
<reference key="1">
    <citation type="journal article" date="2007" name="Genome Res.">
        <title>Reductive evolution and niche adaptation inferred from the genome of Mycobacterium ulcerans, the causative agent of Buruli ulcer.</title>
        <authorList>
            <person name="Stinear T.P."/>
            <person name="Seemann T."/>
            <person name="Pidot S."/>
            <person name="Frigui W."/>
            <person name="Reysset G."/>
            <person name="Garnier T."/>
            <person name="Meurice G."/>
            <person name="Simon D."/>
            <person name="Bouchier C."/>
            <person name="Ma L."/>
            <person name="Tichit M."/>
            <person name="Porter J.L."/>
            <person name="Ryan J."/>
            <person name="Johnson P.D.R."/>
            <person name="Davies J.K."/>
            <person name="Jenkin G.A."/>
            <person name="Small P.L.C."/>
            <person name="Jones L.M."/>
            <person name="Tekaia F."/>
            <person name="Laval F."/>
            <person name="Daffe M."/>
            <person name="Parkhill J."/>
            <person name="Cole S.T."/>
        </authorList>
    </citation>
    <scope>NUCLEOTIDE SEQUENCE [LARGE SCALE GENOMIC DNA]</scope>
    <source>
        <strain>Agy99</strain>
    </source>
</reference>
<proteinExistence type="inferred from homology"/>
<gene>
    <name evidence="1" type="primary">rpsP</name>
    <name type="ordered locus">MUL_2047</name>
</gene>
<dbReference type="EMBL" id="CP000325">
    <property type="protein sequence ID" value="ABL04482.1"/>
    <property type="molecule type" value="Genomic_DNA"/>
</dbReference>
<dbReference type="RefSeq" id="WP_011740100.1">
    <property type="nucleotide sequence ID" value="NC_008611.1"/>
</dbReference>
<dbReference type="SMR" id="A0PQ63"/>
<dbReference type="KEGG" id="mul:MUL_2047"/>
<dbReference type="eggNOG" id="COG0228">
    <property type="taxonomic scope" value="Bacteria"/>
</dbReference>
<dbReference type="HOGENOM" id="CLU_100590_1_1_11"/>
<dbReference type="Proteomes" id="UP000000765">
    <property type="component" value="Chromosome"/>
</dbReference>
<dbReference type="GO" id="GO:0005737">
    <property type="term" value="C:cytoplasm"/>
    <property type="evidence" value="ECO:0007669"/>
    <property type="project" value="UniProtKB-ARBA"/>
</dbReference>
<dbReference type="GO" id="GO:0015935">
    <property type="term" value="C:small ribosomal subunit"/>
    <property type="evidence" value="ECO:0007669"/>
    <property type="project" value="TreeGrafter"/>
</dbReference>
<dbReference type="GO" id="GO:0003735">
    <property type="term" value="F:structural constituent of ribosome"/>
    <property type="evidence" value="ECO:0007669"/>
    <property type="project" value="InterPro"/>
</dbReference>
<dbReference type="GO" id="GO:0006412">
    <property type="term" value="P:translation"/>
    <property type="evidence" value="ECO:0007669"/>
    <property type="project" value="UniProtKB-UniRule"/>
</dbReference>
<dbReference type="Gene3D" id="3.30.1320.10">
    <property type="match status" value="1"/>
</dbReference>
<dbReference type="HAMAP" id="MF_00385">
    <property type="entry name" value="Ribosomal_bS16"/>
    <property type="match status" value="1"/>
</dbReference>
<dbReference type="InterPro" id="IPR000307">
    <property type="entry name" value="Ribosomal_bS16"/>
</dbReference>
<dbReference type="InterPro" id="IPR020592">
    <property type="entry name" value="Ribosomal_bS16_CS"/>
</dbReference>
<dbReference type="InterPro" id="IPR023803">
    <property type="entry name" value="Ribosomal_bS16_dom_sf"/>
</dbReference>
<dbReference type="NCBIfam" id="NF011093">
    <property type="entry name" value="PRK14520.1"/>
    <property type="match status" value="1"/>
</dbReference>
<dbReference type="NCBIfam" id="TIGR00002">
    <property type="entry name" value="S16"/>
    <property type="match status" value="1"/>
</dbReference>
<dbReference type="PANTHER" id="PTHR12919">
    <property type="entry name" value="30S RIBOSOMAL PROTEIN S16"/>
    <property type="match status" value="1"/>
</dbReference>
<dbReference type="PANTHER" id="PTHR12919:SF20">
    <property type="entry name" value="SMALL RIBOSOMAL SUBUNIT PROTEIN BS16M"/>
    <property type="match status" value="1"/>
</dbReference>
<dbReference type="Pfam" id="PF00886">
    <property type="entry name" value="Ribosomal_S16"/>
    <property type="match status" value="1"/>
</dbReference>
<dbReference type="SUPFAM" id="SSF54565">
    <property type="entry name" value="Ribosomal protein S16"/>
    <property type="match status" value="1"/>
</dbReference>
<dbReference type="PROSITE" id="PS00732">
    <property type="entry name" value="RIBOSOMAL_S16"/>
    <property type="match status" value="1"/>
</dbReference>
<organism>
    <name type="scientific">Mycobacterium ulcerans (strain Agy99)</name>
    <dbReference type="NCBI Taxonomy" id="362242"/>
    <lineage>
        <taxon>Bacteria</taxon>
        <taxon>Bacillati</taxon>
        <taxon>Actinomycetota</taxon>
        <taxon>Actinomycetes</taxon>
        <taxon>Mycobacteriales</taxon>
        <taxon>Mycobacteriaceae</taxon>
        <taxon>Mycobacterium</taxon>
        <taxon>Mycobacterium ulcerans group</taxon>
    </lineage>
</organism>
<name>RS16_MYCUA</name>